<proteinExistence type="evidence at transcript level"/>
<sequence>MGRFISVSFGLLVVFLSLSGTGADCPSEWSSHEGHCYKVFKLLKTWEDAEKFCTEQKKGSHLVSLHSREEEKFVVNLISENLEYPATWIGLGNMWKDCRMEWSDRGNVKYKALAEESYCLIMITHEKVWKSMTCNFIAPVVCKF</sequence>
<protein>
    <recommendedName>
        <fullName>Snaclec 6</fullName>
    </recommendedName>
    <alternativeName>
        <fullName>C-type lectin-like 6</fullName>
    </alternativeName>
</protein>
<evidence type="ECO:0000250" key="1"/>
<evidence type="ECO:0000255" key="2"/>
<evidence type="ECO:0000255" key="3">
    <source>
        <dbReference type="PROSITE-ProRule" id="PRU00040"/>
    </source>
</evidence>
<evidence type="ECO:0000305" key="4"/>
<dbReference type="EMBL" id="DQ060419">
    <property type="protein sequence ID" value="AAY63875.1"/>
    <property type="molecule type" value="mRNA"/>
</dbReference>
<dbReference type="SMR" id="Q4PRC7"/>
<dbReference type="GO" id="GO:0005576">
    <property type="term" value="C:extracellular region"/>
    <property type="evidence" value="ECO:0007669"/>
    <property type="project" value="UniProtKB-SubCell"/>
</dbReference>
<dbReference type="GO" id="GO:0090729">
    <property type="term" value="F:toxin activity"/>
    <property type="evidence" value="ECO:0007669"/>
    <property type="project" value="UniProtKB-KW"/>
</dbReference>
<dbReference type="FunFam" id="3.10.100.10:FF:000087">
    <property type="entry name" value="Snaclec rhodocetin subunit delta"/>
    <property type="match status" value="1"/>
</dbReference>
<dbReference type="Gene3D" id="3.10.100.10">
    <property type="entry name" value="Mannose-Binding Protein A, subunit A"/>
    <property type="match status" value="1"/>
</dbReference>
<dbReference type="InterPro" id="IPR001304">
    <property type="entry name" value="C-type_lectin-like"/>
</dbReference>
<dbReference type="InterPro" id="IPR016186">
    <property type="entry name" value="C-type_lectin-like/link_sf"/>
</dbReference>
<dbReference type="InterPro" id="IPR050111">
    <property type="entry name" value="C-type_lectin/snaclec_domain"/>
</dbReference>
<dbReference type="InterPro" id="IPR018378">
    <property type="entry name" value="C-type_lectin_CS"/>
</dbReference>
<dbReference type="InterPro" id="IPR016187">
    <property type="entry name" value="CTDL_fold"/>
</dbReference>
<dbReference type="PANTHER" id="PTHR22803">
    <property type="entry name" value="MANNOSE, PHOSPHOLIPASE, LECTIN RECEPTOR RELATED"/>
    <property type="match status" value="1"/>
</dbReference>
<dbReference type="Pfam" id="PF00059">
    <property type="entry name" value="Lectin_C"/>
    <property type="match status" value="1"/>
</dbReference>
<dbReference type="SMART" id="SM00034">
    <property type="entry name" value="CLECT"/>
    <property type="match status" value="1"/>
</dbReference>
<dbReference type="SUPFAM" id="SSF56436">
    <property type="entry name" value="C-type lectin-like"/>
    <property type="match status" value="1"/>
</dbReference>
<dbReference type="PROSITE" id="PS00615">
    <property type="entry name" value="C_TYPE_LECTIN_1"/>
    <property type="match status" value="1"/>
</dbReference>
<dbReference type="PROSITE" id="PS50041">
    <property type="entry name" value="C_TYPE_LECTIN_2"/>
    <property type="match status" value="1"/>
</dbReference>
<reference key="1">
    <citation type="submission" date="2005-05" db="EMBL/GenBank/DDBJ databases">
        <title>Molecular cloning and sequence analysis of cDNAs encoding seven C-type lectin-like protein subunits from Daboia russellii siamensis.</title>
        <authorList>
            <person name="Zhong S."/>
            <person name="Jin Y."/>
            <person name="Li D."/>
            <person name="Wang W."/>
            <person name="Xiong Y."/>
        </authorList>
    </citation>
    <scope>NUCLEOTIDE SEQUENCE [MRNA]</scope>
</reference>
<organism>
    <name type="scientific">Daboia siamensis</name>
    <name type="common">Eastern Russel's viper</name>
    <name type="synonym">Daboia russelii siamensis</name>
    <dbReference type="NCBI Taxonomy" id="343250"/>
    <lineage>
        <taxon>Eukaryota</taxon>
        <taxon>Metazoa</taxon>
        <taxon>Chordata</taxon>
        <taxon>Craniata</taxon>
        <taxon>Vertebrata</taxon>
        <taxon>Euteleostomi</taxon>
        <taxon>Lepidosauria</taxon>
        <taxon>Squamata</taxon>
        <taxon>Bifurcata</taxon>
        <taxon>Unidentata</taxon>
        <taxon>Episquamata</taxon>
        <taxon>Toxicofera</taxon>
        <taxon>Serpentes</taxon>
        <taxon>Colubroidea</taxon>
        <taxon>Viperidae</taxon>
        <taxon>Viperinae</taxon>
        <taxon>Daboia</taxon>
    </lineage>
</organism>
<name>SL6_DABSI</name>
<accession>Q4PRC7</accession>
<feature type="signal peptide" evidence="2">
    <location>
        <begin position="1"/>
        <end position="23"/>
    </location>
</feature>
<feature type="chain" id="PRO_0000017540" description="Snaclec 6">
    <location>
        <begin position="24"/>
        <end position="144"/>
    </location>
</feature>
<feature type="domain" description="C-type lectin" evidence="3">
    <location>
        <begin position="32"/>
        <end position="143"/>
    </location>
</feature>
<feature type="disulfide bond" evidence="3">
    <location>
        <begin position="25"/>
        <end position="36"/>
    </location>
</feature>
<feature type="disulfide bond" evidence="3">
    <location>
        <begin position="53"/>
        <end position="142"/>
    </location>
</feature>
<feature type="disulfide bond" description="Interchain" evidence="3">
    <location>
        <position position="98"/>
    </location>
</feature>
<feature type="disulfide bond" evidence="3">
    <location>
        <begin position="119"/>
        <end position="134"/>
    </location>
</feature>
<keyword id="KW-1015">Disulfide bond</keyword>
<keyword id="KW-1199">Hemostasis impairing toxin</keyword>
<keyword id="KW-0964">Secreted</keyword>
<keyword id="KW-0732">Signal</keyword>
<keyword id="KW-0800">Toxin</keyword>
<comment type="function">
    <text evidence="1">Interferes with one step of hemostasis (modulation of platelet aggregation, or coagulation cascade, for example).</text>
</comment>
<comment type="subunit">
    <text evidence="1">Heterodimer; disulfide-linked.</text>
</comment>
<comment type="subcellular location">
    <subcellularLocation>
        <location evidence="1">Secreted</location>
    </subcellularLocation>
</comment>
<comment type="similarity">
    <text evidence="4">Belongs to the snaclec family.</text>
</comment>